<gene>
    <name type="ordered locus">MTH_757</name>
</gene>
<name>DFX_METTH</name>
<keyword id="KW-0249">Electron transport</keyword>
<keyword id="KW-0408">Iron</keyword>
<keyword id="KW-0479">Metal-binding</keyword>
<keyword id="KW-1185">Reference proteome</keyword>
<keyword id="KW-0813">Transport</keyword>
<dbReference type="EMBL" id="AE000666">
    <property type="protein sequence ID" value="AAB85260.1"/>
    <property type="molecule type" value="Genomic_DNA"/>
</dbReference>
<dbReference type="PIR" id="B69201">
    <property type="entry name" value="B69201"/>
</dbReference>
<dbReference type="RefSeq" id="WP_010876395.1">
    <property type="nucleotide sequence ID" value="NC_000916.1"/>
</dbReference>
<dbReference type="SMR" id="O26851"/>
<dbReference type="STRING" id="187420.MTH_757"/>
<dbReference type="PaxDb" id="187420-MTH_757"/>
<dbReference type="EnsemblBacteria" id="AAB85260">
    <property type="protein sequence ID" value="AAB85260"/>
    <property type="gene ID" value="MTH_757"/>
</dbReference>
<dbReference type="KEGG" id="mth:MTH_757"/>
<dbReference type="PATRIC" id="fig|187420.15.peg.744"/>
<dbReference type="HOGENOM" id="CLU_118960_1_0_2"/>
<dbReference type="InParanoid" id="O26851"/>
<dbReference type="Proteomes" id="UP000005223">
    <property type="component" value="Chromosome"/>
</dbReference>
<dbReference type="GO" id="GO:0005506">
    <property type="term" value="F:iron ion binding"/>
    <property type="evidence" value="ECO:0007669"/>
    <property type="project" value="InterPro"/>
</dbReference>
<dbReference type="GO" id="GO:0016491">
    <property type="term" value="F:oxidoreductase activity"/>
    <property type="evidence" value="ECO:0007669"/>
    <property type="project" value="InterPro"/>
</dbReference>
<dbReference type="GO" id="GO:0019430">
    <property type="term" value="P:removal of superoxide radicals"/>
    <property type="evidence" value="ECO:0007669"/>
    <property type="project" value="InterPro"/>
</dbReference>
<dbReference type="CDD" id="cd00974">
    <property type="entry name" value="DSRD"/>
    <property type="match status" value="1"/>
</dbReference>
<dbReference type="CDD" id="cd03171">
    <property type="entry name" value="SORL_Dfx_classI"/>
    <property type="match status" value="1"/>
</dbReference>
<dbReference type="Gene3D" id="2.20.28.100">
    <property type="entry name" value="Desulphoferrodoxin, N-terminal domain"/>
    <property type="match status" value="1"/>
</dbReference>
<dbReference type="Gene3D" id="2.60.40.730">
    <property type="entry name" value="SOR catalytic domain"/>
    <property type="match status" value="1"/>
</dbReference>
<dbReference type="InterPro" id="IPR002742">
    <property type="entry name" value="Desulfoferrodoxin_Fe-bd_dom"/>
</dbReference>
<dbReference type="InterPro" id="IPR036073">
    <property type="entry name" value="Desulfoferrodoxin_Fe-bd_dom_sf"/>
</dbReference>
<dbReference type="InterPro" id="IPR004462">
    <property type="entry name" value="Desulfoferrodoxin_N"/>
</dbReference>
<dbReference type="InterPro" id="IPR038094">
    <property type="entry name" value="Desulfoferrodoxin_N_sf"/>
</dbReference>
<dbReference type="InterPro" id="IPR004793">
    <property type="entry name" value="Desulfoferrodoxin_rbo"/>
</dbReference>
<dbReference type="InterPro" id="IPR051233">
    <property type="entry name" value="Desulfoferrodoxin_SOR"/>
</dbReference>
<dbReference type="NCBIfam" id="TIGR00319">
    <property type="entry name" value="desulf_FeS4"/>
    <property type="match status" value="1"/>
</dbReference>
<dbReference type="NCBIfam" id="TIGR00320">
    <property type="entry name" value="dfx_rbo"/>
    <property type="match status" value="1"/>
</dbReference>
<dbReference type="NCBIfam" id="TIGR00332">
    <property type="entry name" value="neela_ferrous"/>
    <property type="match status" value="1"/>
</dbReference>
<dbReference type="PANTHER" id="PTHR36541">
    <property type="entry name" value="SUPEROXIDE REDUCTASE-RELATED"/>
    <property type="match status" value="1"/>
</dbReference>
<dbReference type="PANTHER" id="PTHR36541:SF1">
    <property type="entry name" value="SUPEROXIDE REDUCTASE-RELATED"/>
    <property type="match status" value="1"/>
</dbReference>
<dbReference type="Pfam" id="PF06397">
    <property type="entry name" value="Desulfoferrod_N"/>
    <property type="match status" value="1"/>
</dbReference>
<dbReference type="Pfam" id="PF01880">
    <property type="entry name" value="Desulfoferrodox"/>
    <property type="match status" value="1"/>
</dbReference>
<dbReference type="SUPFAM" id="SSF57802">
    <property type="entry name" value="Rubredoxin-like"/>
    <property type="match status" value="1"/>
</dbReference>
<dbReference type="SUPFAM" id="SSF49367">
    <property type="entry name" value="Superoxide reductase-like"/>
    <property type="match status" value="1"/>
</dbReference>
<proteinExistence type="inferred from homology"/>
<accession>O26851</accession>
<reference key="1">
    <citation type="journal article" date="1997" name="J. Bacteriol.">
        <title>Complete genome sequence of Methanobacterium thermoautotrophicum deltaH: functional analysis and comparative genomics.</title>
        <authorList>
            <person name="Smith D.R."/>
            <person name="Doucette-Stamm L.A."/>
            <person name="Deloughery C."/>
            <person name="Lee H.-M."/>
            <person name="Dubois J."/>
            <person name="Aldredge T."/>
            <person name="Bashirzadeh R."/>
            <person name="Blakely D."/>
            <person name="Cook R."/>
            <person name="Gilbert K."/>
            <person name="Harrison D."/>
            <person name="Hoang L."/>
            <person name="Keagle P."/>
            <person name="Lumm W."/>
            <person name="Pothier B."/>
            <person name="Qiu D."/>
            <person name="Spadafora R."/>
            <person name="Vicare R."/>
            <person name="Wang Y."/>
            <person name="Wierzbowski J."/>
            <person name="Gibson R."/>
            <person name="Jiwani N."/>
            <person name="Caruso A."/>
            <person name="Bush D."/>
            <person name="Safer H."/>
            <person name="Patwell D."/>
            <person name="Prabhakar S."/>
            <person name="McDougall S."/>
            <person name="Shimer G."/>
            <person name="Goyal A."/>
            <person name="Pietrovski S."/>
            <person name="Church G.M."/>
            <person name="Daniels C.J."/>
            <person name="Mao J.-I."/>
            <person name="Rice P."/>
            <person name="Noelling J."/>
            <person name="Reeve J.N."/>
        </authorList>
    </citation>
    <scope>NUCLEOTIDE SEQUENCE [LARGE SCALE GENOMIC DNA]</scope>
    <source>
        <strain>ATCC 29096 / DSM 1053 / JCM 10044 / NBRC 100330 / Delta H</strain>
    </source>
</reference>
<protein>
    <recommendedName>
        <fullName>Desulfoferrodoxin homolog</fullName>
        <shortName>Dfx</shortName>
    </recommendedName>
</protein>
<comment type="cofactor">
    <cofactor evidence="1">
        <name>Fe(3+)</name>
        <dbReference type="ChEBI" id="CHEBI:29034"/>
    </cofactor>
    <text evidence="1">Binds 1 Fe(3+) ion per subunit. The iron ion 1 is coordinated via 4 cysteine residues.</text>
</comment>
<comment type="cofactor">
    <cofactor evidence="1">
        <name>Cu(2+)</name>
        <dbReference type="ChEBI" id="CHEBI:29036"/>
    </cofactor>
    <text evidence="1">Binds 1 Fe(2+) ion per subunit. The iron ion 2 is coordinated via four histidines and one cysteine residue.</text>
</comment>
<comment type="similarity">
    <text evidence="2">Belongs to the desulfoferrodoxin family.</text>
</comment>
<sequence length="124" mass="13988">MTETNQIFRCNVCGNIVEVLNPGAGQLVCCNQPMELLVARRTDVGPEKHVPVVEETGTGIRVKVGEVPHPMEENHHIQWIEVIAGDMVYRKDLNPGDNPEAEFPVEMASDFMVRIYCNIHGLWY</sequence>
<organism>
    <name type="scientific">Methanothermobacter thermautotrophicus (strain ATCC 29096 / DSM 1053 / JCM 10044 / NBRC 100330 / Delta H)</name>
    <name type="common">Methanobacterium thermoautotrophicum</name>
    <dbReference type="NCBI Taxonomy" id="187420"/>
    <lineage>
        <taxon>Archaea</taxon>
        <taxon>Methanobacteriati</taxon>
        <taxon>Methanobacteriota</taxon>
        <taxon>Methanomada group</taxon>
        <taxon>Methanobacteria</taxon>
        <taxon>Methanobacteriales</taxon>
        <taxon>Methanobacteriaceae</taxon>
        <taxon>Methanothermobacter</taxon>
    </lineage>
</organism>
<feature type="chain" id="PRO_0000140868" description="Desulfoferrodoxin homolog">
    <location>
        <begin position="1"/>
        <end position="124"/>
    </location>
</feature>
<feature type="binding site" evidence="1">
    <location>
        <position position="10"/>
    </location>
    <ligand>
        <name>Fe cation</name>
        <dbReference type="ChEBI" id="CHEBI:24875"/>
        <label>1</label>
    </ligand>
</feature>
<feature type="binding site" evidence="1">
    <location>
        <position position="13"/>
    </location>
    <ligand>
        <name>Fe cation</name>
        <dbReference type="ChEBI" id="CHEBI:24875"/>
        <label>1</label>
    </ligand>
</feature>
<feature type="binding site" evidence="1">
    <location>
        <position position="29"/>
    </location>
    <ligand>
        <name>Fe cation</name>
        <dbReference type="ChEBI" id="CHEBI:24875"/>
        <label>1</label>
    </ligand>
</feature>
<feature type="binding site" evidence="1">
    <location>
        <position position="30"/>
    </location>
    <ligand>
        <name>Fe cation</name>
        <dbReference type="ChEBI" id="CHEBI:24875"/>
        <label>1</label>
    </ligand>
</feature>
<feature type="binding site" evidence="1">
    <location>
        <position position="49"/>
    </location>
    <ligand>
        <name>Fe cation</name>
        <dbReference type="ChEBI" id="CHEBI:24875"/>
        <label>2</label>
    </ligand>
</feature>
<feature type="binding site" evidence="1">
    <location>
        <position position="69"/>
    </location>
    <ligand>
        <name>Fe cation</name>
        <dbReference type="ChEBI" id="CHEBI:24875"/>
        <label>2</label>
    </ligand>
</feature>
<feature type="binding site" evidence="1">
    <location>
        <position position="75"/>
    </location>
    <ligand>
        <name>Fe cation</name>
        <dbReference type="ChEBI" id="CHEBI:24875"/>
        <label>2</label>
    </ligand>
</feature>
<feature type="binding site" evidence="1">
    <location>
        <position position="117"/>
    </location>
    <ligand>
        <name>Fe cation</name>
        <dbReference type="ChEBI" id="CHEBI:24875"/>
        <label>2</label>
    </ligand>
</feature>
<feature type="binding site" evidence="1">
    <location>
        <position position="120"/>
    </location>
    <ligand>
        <name>Fe cation</name>
        <dbReference type="ChEBI" id="CHEBI:24875"/>
        <label>2</label>
    </ligand>
</feature>
<evidence type="ECO:0000250" key="1"/>
<evidence type="ECO:0000305" key="2"/>